<keyword id="KW-0963">Cytoplasm</keyword>
<keyword id="KW-0408">Iron</keyword>
<keyword id="KW-0479">Metal-binding</keyword>
<keyword id="KW-0346">Stress response</keyword>
<name>YTFE_SALPK</name>
<proteinExistence type="inferred from homology"/>
<reference key="1">
    <citation type="journal article" date="2009" name="BMC Genomics">
        <title>Pseudogene accumulation in the evolutionary histories of Salmonella enterica serovars Paratyphi A and Typhi.</title>
        <authorList>
            <person name="Holt K.E."/>
            <person name="Thomson N.R."/>
            <person name="Wain J."/>
            <person name="Langridge G.C."/>
            <person name="Hasan R."/>
            <person name="Bhutta Z.A."/>
            <person name="Quail M.A."/>
            <person name="Norbertczak H."/>
            <person name="Walker D."/>
            <person name="Simmonds M."/>
            <person name="White B."/>
            <person name="Bason N."/>
            <person name="Mungall K."/>
            <person name="Dougan G."/>
            <person name="Parkhill J."/>
        </authorList>
    </citation>
    <scope>NUCLEOTIDE SEQUENCE [LARGE SCALE GENOMIC DNA]</scope>
    <source>
        <strain>AKU_12601</strain>
    </source>
</reference>
<feature type="chain" id="PRO_1000148188" description="Iron-sulfur cluster repair protein YtfE">
    <location>
        <begin position="1"/>
        <end position="220"/>
    </location>
</feature>
<comment type="function">
    <text evidence="1">Di-iron-containing protein involved in the repair of iron-sulfur clusters damaged by oxidative and nitrosative stress conditions.</text>
</comment>
<comment type="subunit">
    <text evidence="1">Homodimer.</text>
</comment>
<comment type="subcellular location">
    <subcellularLocation>
        <location evidence="1">Cytoplasm</location>
    </subcellularLocation>
</comment>
<comment type="similarity">
    <text evidence="1">Belongs to the RIC family. YtfE subfamily.</text>
</comment>
<organism>
    <name type="scientific">Salmonella paratyphi A (strain AKU_12601)</name>
    <dbReference type="NCBI Taxonomy" id="554290"/>
    <lineage>
        <taxon>Bacteria</taxon>
        <taxon>Pseudomonadati</taxon>
        <taxon>Pseudomonadota</taxon>
        <taxon>Gammaproteobacteria</taxon>
        <taxon>Enterobacterales</taxon>
        <taxon>Enterobacteriaceae</taxon>
        <taxon>Salmonella</taxon>
    </lineage>
</organism>
<protein>
    <recommendedName>
        <fullName evidence="1">Iron-sulfur cluster repair protein YtfE</fullName>
    </recommendedName>
</protein>
<evidence type="ECO:0000255" key="1">
    <source>
        <dbReference type="HAMAP-Rule" id="MF_01606"/>
    </source>
</evidence>
<dbReference type="EMBL" id="FM200053">
    <property type="protein sequence ID" value="CAR62204.1"/>
    <property type="molecule type" value="Genomic_DNA"/>
</dbReference>
<dbReference type="RefSeq" id="WP_000331471.1">
    <property type="nucleotide sequence ID" value="NC_011147.1"/>
</dbReference>
<dbReference type="SMR" id="B5BKL8"/>
<dbReference type="KEGG" id="sek:SSPA3917"/>
<dbReference type="HOGENOM" id="CLU_076075_2_0_6"/>
<dbReference type="Proteomes" id="UP000001869">
    <property type="component" value="Chromosome"/>
</dbReference>
<dbReference type="GO" id="GO:0005737">
    <property type="term" value="C:cytoplasm"/>
    <property type="evidence" value="ECO:0007669"/>
    <property type="project" value="UniProtKB-SubCell"/>
</dbReference>
<dbReference type="GO" id="GO:0046872">
    <property type="term" value="F:metal ion binding"/>
    <property type="evidence" value="ECO:0007669"/>
    <property type="project" value="UniProtKB-KW"/>
</dbReference>
<dbReference type="GO" id="GO:0030091">
    <property type="term" value="P:protein repair"/>
    <property type="evidence" value="ECO:0007669"/>
    <property type="project" value="UniProtKB-UniRule"/>
</dbReference>
<dbReference type="GO" id="GO:0051409">
    <property type="term" value="P:response to nitrosative stress"/>
    <property type="evidence" value="ECO:0007669"/>
    <property type="project" value="UniProtKB-UniRule"/>
</dbReference>
<dbReference type="GO" id="GO:0006979">
    <property type="term" value="P:response to oxidative stress"/>
    <property type="evidence" value="ECO:0007669"/>
    <property type="project" value="UniProtKB-UniRule"/>
</dbReference>
<dbReference type="FunFam" id="1.20.120.520:FF:000001">
    <property type="entry name" value="Iron-sulfur cluster repair protein YtfE"/>
    <property type="match status" value="1"/>
</dbReference>
<dbReference type="Gene3D" id="1.20.120.520">
    <property type="entry name" value="nmb1532 protein domain like"/>
    <property type="match status" value="1"/>
</dbReference>
<dbReference type="HAMAP" id="MF_01606">
    <property type="entry name" value="RIC_YtfE"/>
    <property type="match status" value="1"/>
</dbReference>
<dbReference type="InterPro" id="IPR023742">
    <property type="entry name" value="FeS-repair_YftE"/>
</dbReference>
<dbReference type="InterPro" id="IPR012312">
    <property type="entry name" value="Hemerythrin-like"/>
</dbReference>
<dbReference type="InterPro" id="IPR019903">
    <property type="entry name" value="RIC_family"/>
</dbReference>
<dbReference type="NCBIfam" id="TIGR03652">
    <property type="entry name" value="FeS_repair_RIC"/>
    <property type="match status" value="1"/>
</dbReference>
<dbReference type="NCBIfam" id="NF008221">
    <property type="entry name" value="PRK10992.1"/>
    <property type="match status" value="1"/>
</dbReference>
<dbReference type="PANTHER" id="PTHR36438">
    <property type="entry name" value="IRON-SULFUR CLUSTER REPAIR PROTEIN YTFE"/>
    <property type="match status" value="1"/>
</dbReference>
<dbReference type="PANTHER" id="PTHR36438:SF1">
    <property type="entry name" value="IRON-SULFUR CLUSTER REPAIR PROTEIN YTFE"/>
    <property type="match status" value="1"/>
</dbReference>
<dbReference type="Pfam" id="PF01814">
    <property type="entry name" value="Hemerythrin"/>
    <property type="match status" value="1"/>
</dbReference>
<dbReference type="Pfam" id="PF04405">
    <property type="entry name" value="ScdA_N"/>
    <property type="match status" value="1"/>
</dbReference>
<gene>
    <name evidence="1" type="primary">ytfE</name>
    <name type="ordered locus">SSPA3917</name>
</gene>
<accession>B5BKL8</accession>
<sequence length="220" mass="24911">MAYRDQPLGELALSIPRASALFRQYDMDYCCGGKQTLARAAARHDVDIDIIEAQLAQLAEQPIEKDWRAVPLADIIDHIVVRYHDRHREQLPELILQATKVERVHADKPNVPRGLTKYLTALHEELSSHMMKEEQILFPMIKQGMGRQATGPISVMESEHDEAGELVDVIKHVTQNVTPPPEACTTWKAMYNGINEMIDDLMEHISLENNVLFPRALAGE</sequence>